<proteinExistence type="inferred from homology"/>
<comment type="similarity">
    <text evidence="1">Belongs to the bacterial ribosomal protein bL28 family.</text>
</comment>
<protein>
    <recommendedName>
        <fullName evidence="1">Large ribosomal subunit protein bL28</fullName>
    </recommendedName>
    <alternativeName>
        <fullName evidence="2">50S ribosomal protein L28</fullName>
    </alternativeName>
</protein>
<dbReference type="EMBL" id="CP001072">
    <property type="protein sequence ID" value="ACD48327.1"/>
    <property type="molecule type" value="Genomic_DNA"/>
</dbReference>
<dbReference type="RefSeq" id="WP_001119000.1">
    <property type="nucleotide sequence ID" value="NC_010698.2"/>
</dbReference>
<dbReference type="SMR" id="B2UTZ5"/>
<dbReference type="GeneID" id="93236841"/>
<dbReference type="KEGG" id="hps:HPSH_04460"/>
<dbReference type="HOGENOM" id="CLU_064548_7_2_7"/>
<dbReference type="GO" id="GO:1990904">
    <property type="term" value="C:ribonucleoprotein complex"/>
    <property type="evidence" value="ECO:0007669"/>
    <property type="project" value="UniProtKB-KW"/>
</dbReference>
<dbReference type="GO" id="GO:0005840">
    <property type="term" value="C:ribosome"/>
    <property type="evidence" value="ECO:0007669"/>
    <property type="project" value="UniProtKB-KW"/>
</dbReference>
<dbReference type="GO" id="GO:0003735">
    <property type="term" value="F:structural constituent of ribosome"/>
    <property type="evidence" value="ECO:0007669"/>
    <property type="project" value="InterPro"/>
</dbReference>
<dbReference type="GO" id="GO:0006412">
    <property type="term" value="P:translation"/>
    <property type="evidence" value="ECO:0007669"/>
    <property type="project" value="UniProtKB-UniRule"/>
</dbReference>
<dbReference type="Gene3D" id="2.30.170.40">
    <property type="entry name" value="Ribosomal protein L28/L24"/>
    <property type="match status" value="1"/>
</dbReference>
<dbReference type="HAMAP" id="MF_00373">
    <property type="entry name" value="Ribosomal_bL28"/>
    <property type="match status" value="1"/>
</dbReference>
<dbReference type="InterPro" id="IPR050096">
    <property type="entry name" value="Bacterial_rp_bL28"/>
</dbReference>
<dbReference type="InterPro" id="IPR026569">
    <property type="entry name" value="Ribosomal_bL28"/>
</dbReference>
<dbReference type="InterPro" id="IPR034704">
    <property type="entry name" value="Ribosomal_bL28/bL31-like_sf"/>
</dbReference>
<dbReference type="InterPro" id="IPR001383">
    <property type="entry name" value="Ribosomal_bL28_bact-type"/>
</dbReference>
<dbReference type="InterPro" id="IPR037147">
    <property type="entry name" value="Ribosomal_bL28_sf"/>
</dbReference>
<dbReference type="NCBIfam" id="TIGR00009">
    <property type="entry name" value="L28"/>
    <property type="match status" value="1"/>
</dbReference>
<dbReference type="PANTHER" id="PTHR39080">
    <property type="entry name" value="50S RIBOSOMAL PROTEIN L28"/>
    <property type="match status" value="1"/>
</dbReference>
<dbReference type="PANTHER" id="PTHR39080:SF1">
    <property type="entry name" value="LARGE RIBOSOMAL SUBUNIT PROTEIN BL28A"/>
    <property type="match status" value="1"/>
</dbReference>
<dbReference type="Pfam" id="PF00830">
    <property type="entry name" value="Ribosomal_L28"/>
    <property type="match status" value="1"/>
</dbReference>
<dbReference type="SUPFAM" id="SSF143800">
    <property type="entry name" value="L28p-like"/>
    <property type="match status" value="1"/>
</dbReference>
<gene>
    <name evidence="1" type="primary">rpmB</name>
    <name type="ordered locus">HPSH_04460</name>
</gene>
<evidence type="ECO:0000255" key="1">
    <source>
        <dbReference type="HAMAP-Rule" id="MF_00373"/>
    </source>
</evidence>
<evidence type="ECO:0000305" key="2"/>
<feature type="chain" id="PRO_1000121644" description="Large ribosomal subunit protein bL28">
    <location>
        <begin position="1"/>
        <end position="62"/>
    </location>
</feature>
<reference key="1">
    <citation type="submission" date="2008-05" db="EMBL/GenBank/DDBJ databases">
        <title>Genome sequence of Helicobacter pylori from the remote Amazon: traces of Asian ancestry of the first Americans.</title>
        <authorList>
            <person name="Kersulyte D."/>
            <person name="Kalia A."/>
            <person name="Gilman R.H."/>
            <person name="Berg D.E."/>
        </authorList>
    </citation>
    <scope>NUCLEOTIDE SEQUENCE [LARGE SCALE GENOMIC DNA]</scope>
    <source>
        <strain>Shi470</strain>
    </source>
</reference>
<sequence>MAKRCALTFKGPMVGNHVSHANNKNKRRLLPNLRSIKIQLDDGTTKRIKVAASTLRTMRKGA</sequence>
<organism>
    <name type="scientific">Helicobacter pylori (strain Shi470)</name>
    <dbReference type="NCBI Taxonomy" id="512562"/>
    <lineage>
        <taxon>Bacteria</taxon>
        <taxon>Pseudomonadati</taxon>
        <taxon>Campylobacterota</taxon>
        <taxon>Epsilonproteobacteria</taxon>
        <taxon>Campylobacterales</taxon>
        <taxon>Helicobacteraceae</taxon>
        <taxon>Helicobacter</taxon>
    </lineage>
</organism>
<keyword id="KW-0687">Ribonucleoprotein</keyword>
<keyword id="KW-0689">Ribosomal protein</keyword>
<name>RL28_HELPS</name>
<accession>B2UTZ5</accession>